<keyword id="KW-0010">Activator</keyword>
<keyword id="KW-1005">Bacterial flagellum biogenesis</keyword>
<keyword id="KW-0963">Cytoplasm</keyword>
<keyword id="KW-1015">Disulfide bond</keyword>
<keyword id="KW-0238">DNA-binding</keyword>
<keyword id="KW-1185">Reference proteome</keyword>
<keyword id="KW-0804">Transcription</keyword>
<keyword id="KW-0805">Transcription regulation</keyword>
<accession>Q3Z2S0</accession>
<name>FLHD_SHISS</name>
<sequence>MGIMHTSELLKHIYDINLSYLLLAQRLIVQDKASAMFRLGINEEMATTLAALTLPQMVKLAETNQLVCHFRFDSHQTITQLTQDSRVDDLQQIHTGIMLSTRLLNDVNQPEEALRKKRA</sequence>
<gene>
    <name evidence="1" type="primary">flhD</name>
    <name type="ordered locus">SSON_1225</name>
</gene>
<reference key="1">
    <citation type="journal article" date="2005" name="Nucleic Acids Res.">
        <title>Genome dynamics and diversity of Shigella species, the etiologic agents of bacillary dysentery.</title>
        <authorList>
            <person name="Yang F."/>
            <person name="Yang J."/>
            <person name="Zhang X."/>
            <person name="Chen L."/>
            <person name="Jiang Y."/>
            <person name="Yan Y."/>
            <person name="Tang X."/>
            <person name="Wang J."/>
            <person name="Xiong Z."/>
            <person name="Dong J."/>
            <person name="Xue Y."/>
            <person name="Zhu Y."/>
            <person name="Xu X."/>
            <person name="Sun L."/>
            <person name="Chen S."/>
            <person name="Nie H."/>
            <person name="Peng J."/>
            <person name="Xu J."/>
            <person name="Wang Y."/>
            <person name="Yuan Z."/>
            <person name="Wen Y."/>
            <person name="Yao Z."/>
            <person name="Shen Y."/>
            <person name="Qiang B."/>
            <person name="Hou Y."/>
            <person name="Yu J."/>
            <person name="Jin Q."/>
        </authorList>
    </citation>
    <scope>NUCLEOTIDE SEQUENCE [LARGE SCALE GENOMIC DNA]</scope>
    <source>
        <strain>Ss046</strain>
    </source>
</reference>
<protein>
    <recommendedName>
        <fullName evidence="1">Flagellar transcriptional regulator FlhD</fullName>
    </recommendedName>
</protein>
<dbReference type="EMBL" id="CP000038">
    <property type="protein sequence ID" value="AAZ87942.1"/>
    <property type="molecule type" value="Genomic_DNA"/>
</dbReference>
<dbReference type="SMR" id="Q3Z2S0"/>
<dbReference type="KEGG" id="ssn:SSON_1225"/>
<dbReference type="HOGENOM" id="CLU_144160_0_0_6"/>
<dbReference type="Proteomes" id="UP000002529">
    <property type="component" value="Chromosome"/>
</dbReference>
<dbReference type="GO" id="GO:0005737">
    <property type="term" value="C:cytoplasm"/>
    <property type="evidence" value="ECO:0007669"/>
    <property type="project" value="UniProtKB-SubCell"/>
</dbReference>
<dbReference type="GO" id="GO:0003677">
    <property type="term" value="F:DNA binding"/>
    <property type="evidence" value="ECO:0007669"/>
    <property type="project" value="UniProtKB-UniRule"/>
</dbReference>
<dbReference type="GO" id="GO:0044780">
    <property type="term" value="P:bacterial-type flagellum assembly"/>
    <property type="evidence" value="ECO:0007669"/>
    <property type="project" value="InterPro"/>
</dbReference>
<dbReference type="GO" id="GO:0045893">
    <property type="term" value="P:positive regulation of DNA-templated transcription"/>
    <property type="evidence" value="ECO:0007669"/>
    <property type="project" value="InterPro"/>
</dbReference>
<dbReference type="GO" id="GO:1902208">
    <property type="term" value="P:regulation of bacterial-type flagellum assembly"/>
    <property type="evidence" value="ECO:0007669"/>
    <property type="project" value="UniProtKB-UniRule"/>
</dbReference>
<dbReference type="FunFam" id="1.10.4000.10:FF:000001">
    <property type="entry name" value="Flagellar transcriptional regulator FlhD"/>
    <property type="match status" value="1"/>
</dbReference>
<dbReference type="Gene3D" id="1.10.4000.10">
    <property type="entry name" value="Flagellar transcriptional activator FlhD"/>
    <property type="match status" value="1"/>
</dbReference>
<dbReference type="HAMAP" id="MF_00725">
    <property type="entry name" value="FlhD"/>
    <property type="match status" value="1"/>
</dbReference>
<dbReference type="InterPro" id="IPR023559">
    <property type="entry name" value="Flagellar_FlhD"/>
</dbReference>
<dbReference type="InterPro" id="IPR036194">
    <property type="entry name" value="FlhD_sf"/>
</dbReference>
<dbReference type="NCBIfam" id="NF002783">
    <property type="entry name" value="PRK02909.1-1"/>
    <property type="match status" value="1"/>
</dbReference>
<dbReference type="Pfam" id="PF05247">
    <property type="entry name" value="FlhD"/>
    <property type="match status" value="1"/>
</dbReference>
<dbReference type="SUPFAM" id="SSF63592">
    <property type="entry name" value="Flagellar transcriptional activator FlhD"/>
    <property type="match status" value="1"/>
</dbReference>
<comment type="function">
    <text evidence="1">Functions in complex with FlhC as a master transcriptional regulator that regulates transcription of several flagellar and non-flagellar operons by binding to their promoter region. Activates expression of class 2 flagellar genes, including fliA, which is a flagellum-specific sigma factor that turns on the class 3 genes. Also regulates genes whose products function in a variety of physiological pathways.</text>
</comment>
<comment type="subunit">
    <text evidence="1">Homodimer; disulfide-linked. Forms a heterohexamer composed of two FlhC and four FlhD subunits. Each FlhC binds a FlhD dimer, forming a heterotrimer, and a hexamer assembles by dimerization of two heterotrimers.</text>
</comment>
<comment type="subcellular location">
    <subcellularLocation>
        <location evidence="1">Cytoplasm</location>
    </subcellularLocation>
</comment>
<comment type="domain">
    <text evidence="1">The C-terminal region contains a putative helix-turn-helix (HTH) motif, suggesting that this region may bind DNA.</text>
</comment>
<comment type="similarity">
    <text evidence="1">Belongs to the FlhD family.</text>
</comment>
<evidence type="ECO:0000255" key="1">
    <source>
        <dbReference type="HAMAP-Rule" id="MF_00725"/>
    </source>
</evidence>
<proteinExistence type="inferred from homology"/>
<organism>
    <name type="scientific">Shigella sonnei (strain Ss046)</name>
    <dbReference type="NCBI Taxonomy" id="300269"/>
    <lineage>
        <taxon>Bacteria</taxon>
        <taxon>Pseudomonadati</taxon>
        <taxon>Pseudomonadota</taxon>
        <taxon>Gammaproteobacteria</taxon>
        <taxon>Enterobacterales</taxon>
        <taxon>Enterobacteriaceae</taxon>
        <taxon>Shigella</taxon>
    </lineage>
</organism>
<feature type="chain" id="PRO_1000062104" description="Flagellar transcriptional regulator FlhD">
    <location>
        <begin position="1"/>
        <end position="119"/>
    </location>
</feature>
<feature type="disulfide bond" description="Interchain" evidence="1">
    <location>
        <position position="68"/>
    </location>
</feature>